<sequence length="401" mass="43114">MDIVNDLVSSISSISSEAAEEEAIRDELRNDKGGLIAGIFVLTLTASFVPWFLTKAKITNLVSVVSILTCLSAGVIIGAGFNHILPDAAEEFQSYVEAVAPDNKYGDFPFAHTITIVTMFALICVDKILVSGGLDGEADHNHMDLSQHNHPSPHAAGEIDLNIYTNGDDDDDDVNEDQEEDSTKDDEKEHGHGHGHGHGHNSSNSSSNGHGHGLKKKKKSKKEHGHGHNHDHSSNGHSHKDEKDSEKVNVSSKSKAWVFLVALSLHSIFDGLGLGSETQKDSFYGLLIAVLAHKFLDGLVLGIAIKYAYFSFKFSCIALVFAAAMTPLGIGIGMAISSAYESSTDAYLVKGIILSITCGSFIYISLIELLPSGLCQKGWPKLKLAVAFLGYSVMAILALWV</sequence>
<keyword id="KW-0406">Ion transport</keyword>
<keyword id="KW-0472">Membrane</keyword>
<keyword id="KW-0479">Metal-binding</keyword>
<keyword id="KW-1185">Reference proteome</keyword>
<keyword id="KW-0812">Transmembrane</keyword>
<keyword id="KW-1133">Transmembrane helix</keyword>
<keyword id="KW-0813">Transport</keyword>
<proteinExistence type="evidence at transcript level"/>
<evidence type="ECO:0000250" key="1"/>
<evidence type="ECO:0000255" key="2"/>
<evidence type="ECO:0000256" key="3">
    <source>
        <dbReference type="SAM" id="MobiDB-lite"/>
    </source>
</evidence>
<evidence type="ECO:0000269" key="4">
    <source>
    </source>
</evidence>
<evidence type="ECO:0000305" key="5"/>
<gene>
    <name type="primary">zntC</name>
    <name type="ORF">DDB_G0286049</name>
</gene>
<comment type="function">
    <text evidence="1 4">May transport divalent cations (By similarity). May participate, with dstA, in the regulation of the differentiation of stalk cells during development.</text>
</comment>
<comment type="subcellular location">
    <subcellularLocation>
        <location evidence="5">Membrane</location>
        <topology evidence="5">Multi-pass membrane protein</topology>
    </subcellularLocation>
</comment>
<comment type="developmental stage">
    <text evidence="4">Expressed in the prestalk cells type pstAB or at the stalk entrance during culmination and slug stage, this expression being weak in the dstA null mutant.</text>
</comment>
<comment type="similarity">
    <text evidence="5">Belongs to the ZIP transporter (TC 2.A.5) family.</text>
</comment>
<dbReference type="EMBL" id="AAFI02000085">
    <property type="protein sequence ID" value="EAL64403.1"/>
    <property type="molecule type" value="Genomic_DNA"/>
</dbReference>
<dbReference type="RefSeq" id="XP_637915.1">
    <property type="nucleotide sequence ID" value="XM_632823.1"/>
</dbReference>
<dbReference type="SMR" id="Q54MB9"/>
<dbReference type="FunCoup" id="Q54MB9">
    <property type="interactions" value="14"/>
</dbReference>
<dbReference type="STRING" id="44689.Q54MB9"/>
<dbReference type="TCDB" id="2.A.5.1.9">
    <property type="family name" value="the zinc (zn(2+))-iron (fe(2+)) permease (zip) family"/>
</dbReference>
<dbReference type="PaxDb" id="44689-DDB0266634"/>
<dbReference type="EnsemblProtists" id="EAL64403">
    <property type="protein sequence ID" value="EAL64403"/>
    <property type="gene ID" value="DDB_G0286049"/>
</dbReference>
<dbReference type="GeneID" id="8625426"/>
<dbReference type="KEGG" id="ddi:DDB_G0286049"/>
<dbReference type="dictyBase" id="DDB_G0286049">
    <property type="gene designation" value="zplE"/>
</dbReference>
<dbReference type="VEuPathDB" id="AmoebaDB:DDB_G0286049"/>
<dbReference type="eggNOG" id="KOG1558">
    <property type="taxonomic scope" value="Eukaryota"/>
</dbReference>
<dbReference type="HOGENOM" id="CLU_673519_0_0_1"/>
<dbReference type="InParanoid" id="Q54MB9"/>
<dbReference type="OMA" id="FAHTITI"/>
<dbReference type="PhylomeDB" id="Q54MB9"/>
<dbReference type="PRO" id="PR:Q54MB9"/>
<dbReference type="Proteomes" id="UP000002195">
    <property type="component" value="Chromosome 4"/>
</dbReference>
<dbReference type="GO" id="GO:0005886">
    <property type="term" value="C:plasma membrane"/>
    <property type="evidence" value="ECO:0000318"/>
    <property type="project" value="GO_Central"/>
</dbReference>
<dbReference type="GO" id="GO:0046872">
    <property type="term" value="F:metal ion binding"/>
    <property type="evidence" value="ECO:0007669"/>
    <property type="project" value="UniProtKB-KW"/>
</dbReference>
<dbReference type="GO" id="GO:0005385">
    <property type="term" value="F:zinc ion transmembrane transporter activity"/>
    <property type="evidence" value="ECO:0000318"/>
    <property type="project" value="GO_Central"/>
</dbReference>
<dbReference type="GO" id="GO:0071577">
    <property type="term" value="P:zinc ion transmembrane transport"/>
    <property type="evidence" value="ECO:0000318"/>
    <property type="project" value="GO_Central"/>
</dbReference>
<dbReference type="InterPro" id="IPR003689">
    <property type="entry name" value="ZIP"/>
</dbReference>
<dbReference type="PANTHER" id="PTHR11040:SF44">
    <property type="entry name" value="PROTEIN ZNTC-RELATED"/>
    <property type="match status" value="1"/>
</dbReference>
<dbReference type="PANTHER" id="PTHR11040">
    <property type="entry name" value="ZINC/IRON TRANSPORTER"/>
    <property type="match status" value="1"/>
</dbReference>
<dbReference type="Pfam" id="PF02535">
    <property type="entry name" value="Zip"/>
    <property type="match status" value="1"/>
</dbReference>
<name>ZNTC_DICDI</name>
<reference key="1">
    <citation type="journal article" date="2005" name="Nature">
        <title>The genome of the social amoeba Dictyostelium discoideum.</title>
        <authorList>
            <person name="Eichinger L."/>
            <person name="Pachebat J.A."/>
            <person name="Gloeckner G."/>
            <person name="Rajandream M.A."/>
            <person name="Sucgang R."/>
            <person name="Berriman M."/>
            <person name="Song J."/>
            <person name="Olsen R."/>
            <person name="Szafranski K."/>
            <person name="Xu Q."/>
            <person name="Tunggal B."/>
            <person name="Kummerfeld S."/>
            <person name="Madera M."/>
            <person name="Konfortov B.A."/>
            <person name="Rivero F."/>
            <person name="Bankier A.T."/>
            <person name="Lehmann R."/>
            <person name="Hamlin N."/>
            <person name="Davies R."/>
            <person name="Gaudet P."/>
            <person name="Fey P."/>
            <person name="Pilcher K."/>
            <person name="Chen G."/>
            <person name="Saunders D."/>
            <person name="Sodergren E.J."/>
            <person name="Davis P."/>
            <person name="Kerhornou A."/>
            <person name="Nie X."/>
            <person name="Hall N."/>
            <person name="Anjard C."/>
            <person name="Hemphill L."/>
            <person name="Bason N."/>
            <person name="Farbrother P."/>
            <person name="Desany B."/>
            <person name="Just E."/>
            <person name="Morio T."/>
            <person name="Rost R."/>
            <person name="Churcher C.M."/>
            <person name="Cooper J."/>
            <person name="Haydock S."/>
            <person name="van Driessche N."/>
            <person name="Cronin A."/>
            <person name="Goodhead I."/>
            <person name="Muzny D.M."/>
            <person name="Mourier T."/>
            <person name="Pain A."/>
            <person name="Lu M."/>
            <person name="Harper D."/>
            <person name="Lindsay R."/>
            <person name="Hauser H."/>
            <person name="James K.D."/>
            <person name="Quiles M."/>
            <person name="Madan Babu M."/>
            <person name="Saito T."/>
            <person name="Buchrieser C."/>
            <person name="Wardroper A."/>
            <person name="Felder M."/>
            <person name="Thangavelu M."/>
            <person name="Johnson D."/>
            <person name="Knights A."/>
            <person name="Loulseged H."/>
            <person name="Mungall K.L."/>
            <person name="Oliver K."/>
            <person name="Price C."/>
            <person name="Quail M.A."/>
            <person name="Urushihara H."/>
            <person name="Hernandez J."/>
            <person name="Rabbinowitsch E."/>
            <person name="Steffen D."/>
            <person name="Sanders M."/>
            <person name="Ma J."/>
            <person name="Kohara Y."/>
            <person name="Sharp S."/>
            <person name="Simmonds M.N."/>
            <person name="Spiegler S."/>
            <person name="Tivey A."/>
            <person name="Sugano S."/>
            <person name="White B."/>
            <person name="Walker D."/>
            <person name="Woodward J.R."/>
            <person name="Winckler T."/>
            <person name="Tanaka Y."/>
            <person name="Shaulsky G."/>
            <person name="Schleicher M."/>
            <person name="Weinstock G.M."/>
            <person name="Rosenthal A."/>
            <person name="Cox E.C."/>
            <person name="Chisholm R.L."/>
            <person name="Gibbs R.A."/>
            <person name="Loomis W.F."/>
            <person name="Platzer M."/>
            <person name="Kay R.R."/>
            <person name="Williams J.G."/>
            <person name="Dear P.H."/>
            <person name="Noegel A.A."/>
            <person name="Barrell B.G."/>
            <person name="Kuspa A."/>
        </authorList>
    </citation>
    <scope>NUCLEOTIDE SEQUENCE [LARGE SCALE GENOMIC DNA]</scope>
    <source>
        <strain>AX4</strain>
    </source>
</reference>
<reference key="2">
    <citation type="journal article" date="2008" name="Int. J. Dev. Biol.">
        <title>Expression of zinc transporter family genes in Dictyostelium.</title>
        <authorList>
            <person name="Sunaga N."/>
            <person name="Monna M."/>
            <person name="Shimada N."/>
            <person name="Tsukamoto M."/>
            <person name="Kawata T."/>
        </authorList>
    </citation>
    <scope>DEVELOPMENTAL STAGE</scope>
    <scope>FUNCTION</scope>
    <source>
        <strain>AX2</strain>
    </source>
</reference>
<protein>
    <recommendedName>
        <fullName>Protein zntC</fullName>
    </recommendedName>
</protein>
<accession>Q54MB9</accession>
<feature type="chain" id="PRO_0000386635" description="Protein zntC">
    <location>
        <begin position="1"/>
        <end position="401"/>
    </location>
</feature>
<feature type="transmembrane region" description="Helical" evidence="2">
    <location>
        <begin position="33"/>
        <end position="53"/>
    </location>
</feature>
<feature type="transmembrane region" description="Helical" evidence="2">
    <location>
        <begin position="61"/>
        <end position="81"/>
    </location>
</feature>
<feature type="transmembrane region" description="Helical" evidence="2">
    <location>
        <begin position="114"/>
        <end position="134"/>
    </location>
</feature>
<feature type="transmembrane region" description="Helical" evidence="2">
    <location>
        <begin position="256"/>
        <end position="276"/>
    </location>
</feature>
<feature type="transmembrane region" description="Helical" evidence="2">
    <location>
        <begin position="285"/>
        <end position="305"/>
    </location>
</feature>
<feature type="transmembrane region" description="Helical" evidence="2">
    <location>
        <begin position="316"/>
        <end position="336"/>
    </location>
</feature>
<feature type="transmembrane region" description="Helical" evidence="2">
    <location>
        <begin position="351"/>
        <end position="371"/>
    </location>
</feature>
<feature type="transmembrane region" description="Helical" evidence="2">
    <location>
        <begin position="381"/>
        <end position="401"/>
    </location>
</feature>
<feature type="region of interest" description="Disordered" evidence="3">
    <location>
        <begin position="141"/>
        <end position="247"/>
    </location>
</feature>
<feature type="compositionally biased region" description="Acidic residues" evidence="3">
    <location>
        <begin position="167"/>
        <end position="184"/>
    </location>
</feature>
<feature type="compositionally biased region" description="Low complexity" evidence="3">
    <location>
        <begin position="200"/>
        <end position="209"/>
    </location>
</feature>
<feature type="compositionally biased region" description="Basic residues" evidence="3">
    <location>
        <begin position="212"/>
        <end position="225"/>
    </location>
</feature>
<feature type="compositionally biased region" description="Basic and acidic residues" evidence="3">
    <location>
        <begin position="226"/>
        <end position="247"/>
    </location>
</feature>
<organism>
    <name type="scientific">Dictyostelium discoideum</name>
    <name type="common">Social amoeba</name>
    <dbReference type="NCBI Taxonomy" id="44689"/>
    <lineage>
        <taxon>Eukaryota</taxon>
        <taxon>Amoebozoa</taxon>
        <taxon>Evosea</taxon>
        <taxon>Eumycetozoa</taxon>
        <taxon>Dictyostelia</taxon>
        <taxon>Dictyosteliales</taxon>
        <taxon>Dictyosteliaceae</taxon>
        <taxon>Dictyostelium</taxon>
    </lineage>
</organism>